<dbReference type="EC" id="3.6.-.-" evidence="2"/>
<dbReference type="EMBL" id="BC107937">
    <property type="protein sequence ID" value="AAI07938.1"/>
    <property type="molecule type" value="mRNA"/>
</dbReference>
<dbReference type="RefSeq" id="NP_001032745.1">
    <property type="nucleotide sequence ID" value="NM_001037656.1"/>
</dbReference>
<dbReference type="FunCoup" id="Q32PX9">
    <property type="interactions" value="2735"/>
</dbReference>
<dbReference type="GlyGen" id="Q32PX9">
    <property type="glycosylation" value="1 site"/>
</dbReference>
<dbReference type="PhosphoSitePlus" id="Q32PX9"/>
<dbReference type="GeneID" id="502479"/>
<dbReference type="KEGG" id="rno:502479"/>
<dbReference type="AGR" id="RGD:1561501"/>
<dbReference type="CTD" id="246269"/>
<dbReference type="RGD" id="1561501">
    <property type="gene designation" value="Afg1l"/>
</dbReference>
<dbReference type="InParanoid" id="Q32PX9"/>
<dbReference type="OrthoDB" id="65426at9989"/>
<dbReference type="PhylomeDB" id="Q32PX9"/>
<dbReference type="PRO" id="PR:Q32PX9"/>
<dbReference type="Proteomes" id="UP000002494">
    <property type="component" value="Unplaced"/>
</dbReference>
<dbReference type="GO" id="GO:0005737">
    <property type="term" value="C:cytoplasm"/>
    <property type="evidence" value="ECO:0000318"/>
    <property type="project" value="GO_Central"/>
</dbReference>
<dbReference type="GO" id="GO:0031966">
    <property type="term" value="C:mitochondrial membrane"/>
    <property type="evidence" value="ECO:0000250"/>
    <property type="project" value="UniProtKB"/>
</dbReference>
<dbReference type="GO" id="GO:0005739">
    <property type="term" value="C:mitochondrion"/>
    <property type="evidence" value="ECO:0000266"/>
    <property type="project" value="RGD"/>
</dbReference>
<dbReference type="GO" id="GO:0005524">
    <property type="term" value="F:ATP binding"/>
    <property type="evidence" value="ECO:0007669"/>
    <property type="project" value="UniProtKB-KW"/>
</dbReference>
<dbReference type="GO" id="GO:0016887">
    <property type="term" value="F:ATP hydrolysis activity"/>
    <property type="evidence" value="ECO:0000318"/>
    <property type="project" value="GO_Central"/>
</dbReference>
<dbReference type="GO" id="GO:0035694">
    <property type="term" value="P:mitochondrial protein catabolic process"/>
    <property type="evidence" value="ECO:0000266"/>
    <property type="project" value="RGD"/>
</dbReference>
<dbReference type="GO" id="GO:0141164">
    <property type="term" value="P:mitochondrial protein quality control"/>
    <property type="evidence" value="ECO:0000266"/>
    <property type="project" value="RGD"/>
</dbReference>
<dbReference type="GO" id="GO:0007005">
    <property type="term" value="P:mitochondrion organization"/>
    <property type="evidence" value="ECO:0000266"/>
    <property type="project" value="RGD"/>
</dbReference>
<dbReference type="FunFam" id="3.40.50.300:FF:000735">
    <property type="entry name" value="Lactation elevated 1 (Predicted)"/>
    <property type="match status" value="1"/>
</dbReference>
<dbReference type="Gene3D" id="3.40.50.300">
    <property type="entry name" value="P-loop containing nucleotide triphosphate hydrolases"/>
    <property type="match status" value="1"/>
</dbReference>
<dbReference type="InterPro" id="IPR005654">
    <property type="entry name" value="ATPase_AFG1-like"/>
</dbReference>
<dbReference type="InterPro" id="IPR027417">
    <property type="entry name" value="P-loop_NTPase"/>
</dbReference>
<dbReference type="NCBIfam" id="NF040713">
    <property type="entry name" value="ZapE"/>
    <property type="match status" value="1"/>
</dbReference>
<dbReference type="PANTHER" id="PTHR12169:SF6">
    <property type="entry name" value="AFG1-LIKE ATPASE"/>
    <property type="match status" value="1"/>
</dbReference>
<dbReference type="PANTHER" id="PTHR12169">
    <property type="entry name" value="ATPASE N2B"/>
    <property type="match status" value="1"/>
</dbReference>
<dbReference type="Pfam" id="PF03969">
    <property type="entry name" value="AFG1_ATPase"/>
    <property type="match status" value="1"/>
</dbReference>
<dbReference type="SUPFAM" id="SSF52540">
    <property type="entry name" value="P-loop containing nucleoside triphosphate hydrolases"/>
    <property type="match status" value="1"/>
</dbReference>
<accession>Q32PX9</accession>
<name>AFG1L_RAT</name>
<reference key="1">
    <citation type="journal article" date="2004" name="Genome Res.">
        <title>The status, quality, and expansion of the NIH full-length cDNA project: the Mammalian Gene Collection (MGC).</title>
        <authorList>
            <consortium name="The MGC Project Team"/>
        </authorList>
    </citation>
    <scope>NUCLEOTIDE SEQUENCE [LARGE SCALE MRNA]</scope>
    <source>
        <tissue>Brain</tissue>
    </source>
</reference>
<protein>
    <recommendedName>
        <fullName evidence="3">AFG1-like ATPase</fullName>
        <ecNumber evidence="2">3.6.-.-</ecNumber>
    </recommendedName>
    <alternativeName>
        <fullName evidence="3">Lactation elevated protein 1</fullName>
    </alternativeName>
</protein>
<proteinExistence type="evidence at transcript level"/>
<evidence type="ECO:0000250" key="1">
    <source>
        <dbReference type="UniProtKB" id="Q8WV93"/>
    </source>
</evidence>
<evidence type="ECO:0000305" key="2"/>
<evidence type="ECO:0000312" key="3">
    <source>
        <dbReference type="RGD" id="1561501"/>
    </source>
</evidence>
<feature type="chain" id="PRO_0000279523" description="AFG1-like ATPase">
    <location>
        <begin position="1"/>
        <end position="480"/>
    </location>
</feature>
<feature type="binding site" evidence="1">
    <location>
        <begin position="136"/>
        <end position="143"/>
    </location>
    <ligand>
        <name>ATP</name>
        <dbReference type="ChEBI" id="CHEBI:30616"/>
    </ligand>
</feature>
<feature type="binding site" evidence="1">
    <location>
        <begin position="209"/>
        <end position="214"/>
    </location>
    <ligand>
        <name>ATP</name>
        <dbReference type="ChEBI" id="CHEBI:30616"/>
    </ligand>
</feature>
<organism>
    <name type="scientific">Rattus norvegicus</name>
    <name type="common">Rat</name>
    <dbReference type="NCBI Taxonomy" id="10116"/>
    <lineage>
        <taxon>Eukaryota</taxon>
        <taxon>Metazoa</taxon>
        <taxon>Chordata</taxon>
        <taxon>Craniata</taxon>
        <taxon>Vertebrata</taxon>
        <taxon>Euteleostomi</taxon>
        <taxon>Mammalia</taxon>
        <taxon>Eutheria</taxon>
        <taxon>Euarchontoglires</taxon>
        <taxon>Glires</taxon>
        <taxon>Rodentia</taxon>
        <taxon>Myomorpha</taxon>
        <taxon>Muroidea</taxon>
        <taxon>Muridae</taxon>
        <taxon>Murinae</taxon>
        <taxon>Rattus</taxon>
    </lineage>
</organism>
<keyword id="KW-0067">ATP-binding</keyword>
<keyword id="KW-0378">Hydrolase</keyword>
<keyword id="KW-0472">Membrane</keyword>
<keyword id="KW-0496">Mitochondrion</keyword>
<keyword id="KW-0547">Nucleotide-binding</keyword>
<keyword id="KW-1185">Reference proteome</keyword>
<comment type="function">
    <text evidence="1">Putative mitochondrial ATPase. Plays a role in mitochondrial morphology and mitochondrial protein metabolism. Promotes degradation of excess nuclear-encoded complex IV subunits (COX4I1, COX5A and COX6A1) and normal activity of complexes III and IV of the respiratory chain. Mediates mitochondrial translocation of TP53 and its transcription-independent apoptosis in response to genotoxic stress.</text>
</comment>
<comment type="subunit">
    <text evidence="1">Found in several complexes of 140-500 kDa. Interacts with YME1L1. Interacts with COX4I1. Interacts with COX5A. Interacts with TP53; mediates mitochondrial translocation of TP53 in response to genotoxic stress such as mitomycin C treatment.</text>
</comment>
<comment type="subcellular location">
    <subcellularLocation>
        <location evidence="1">Mitochondrion membrane</location>
    </subcellularLocation>
</comment>
<comment type="similarity">
    <text evidence="2">Belongs to the AFG1 ATPase family.</text>
</comment>
<sequence>MAASWSPLVTLRSAARSRLTGRGVGCGARVIAIFPPAPGPRKPLWKAYTVQTLEGVRPTAASEAHSRALAVCHGPLAHYDFLIKAQELKNDEHQRRVVQCLQKLQEDLKGYNIEEGGLFSKLFSRNKPPKGLYVYGDVGTGKTMVMDMFYEYVEVKSKRRVHFHGFMLDVHKRIHRLKQSLPKRKVGFMAKSYDPIAPIAEEISQEASLLCFDEFQVTDIADAMILKQLFENLFKNGVVVVATSNRPPEDLYKNGLQRANFVPFIAVLKEYCNTVQLDSGVDYRKRELTPAGKLYYLTSEADVGTVMDKLFDELAQKQNDLTSPRILKVQGRELRLNKACGTVADCTFEELCERPLGASDYLELSKNFDTVIIRNIPQFSLAKRTQVRRFITLIDNFYDFKVRIICSASVPISSLFVYQHQDSESDQSRVLMDDLGLSQDSAGLSMFTGEEEIFSFQRTLSRLTEMQTEQYWIEGDRSRK</sequence>
<gene>
    <name evidence="3" type="primary">Afg1l</name>
    <name evidence="3" type="synonym">Lace1</name>
</gene>